<sequence length="404" mass="43760">MRSQPHVLGIVLAGGEGKRLYPLTADRAKPAVPFGGAYRLIDFVLSNLVNAGYLRLCVLTQYKSHSLDRHISQTWRLSGFAGEYITPVPAQQRLGPRWYTGSADAILQSLNLVYDEDPEYIVVFGADHVYRMDPEQMVQHHIESGAGVTVAGIRVPRSEAFAFGCIDSDESGRIVQFLEKPAHPPGTPDDPNMTFASMGNYVFTTKVLVDAIRADSENSDSDHDMGGDIIPALVEAGEASVYDFKDNVVPGATDRDRGYWRDVGTLDAFYDAHMDLVSVHPIFNLYNRRWPIRGETENLAPAKFVQGGLAQESVVGAGCILSAATVRNSVLSSNVMVDSGATVEGSVLMPGVRIGKGAVVRRAILDKNVVVGDGEIIGVDLERDKQRFAVSNGGVVAIGKGVWI</sequence>
<keyword id="KW-0067">ATP-binding</keyword>
<keyword id="KW-0119">Carbohydrate metabolism</keyword>
<keyword id="KW-0320">Glycogen biosynthesis</keyword>
<keyword id="KW-0321">Glycogen metabolism</keyword>
<keyword id="KW-0547">Nucleotide-binding</keyword>
<keyword id="KW-0548">Nucleotidyltransferase</keyword>
<keyword id="KW-0808">Transferase</keyword>
<feature type="chain" id="PRO_1000147232" description="Glucose-1-phosphate adenylyltransferase">
    <location>
        <begin position="1"/>
        <end position="404"/>
    </location>
</feature>
<feature type="binding site" evidence="1">
    <location>
        <position position="99"/>
    </location>
    <ligand>
        <name>alpha-D-glucose 1-phosphate</name>
        <dbReference type="ChEBI" id="CHEBI:58601"/>
    </ligand>
</feature>
<feature type="binding site" evidence="1">
    <location>
        <position position="164"/>
    </location>
    <ligand>
        <name>alpha-D-glucose 1-phosphate</name>
        <dbReference type="ChEBI" id="CHEBI:58601"/>
    </ligand>
</feature>
<feature type="binding site" evidence="1">
    <location>
        <begin position="179"/>
        <end position="180"/>
    </location>
    <ligand>
        <name>alpha-D-glucose 1-phosphate</name>
        <dbReference type="ChEBI" id="CHEBI:58601"/>
    </ligand>
</feature>
<feature type="binding site" evidence="1">
    <location>
        <position position="197"/>
    </location>
    <ligand>
        <name>alpha-D-glucose 1-phosphate</name>
        <dbReference type="ChEBI" id="CHEBI:58601"/>
    </ligand>
</feature>
<proteinExistence type="inferred from homology"/>
<gene>
    <name evidence="1" type="primary">glgC</name>
    <name type="ordered locus">ROP_60350</name>
</gene>
<protein>
    <recommendedName>
        <fullName evidence="1">Glucose-1-phosphate adenylyltransferase</fullName>
        <ecNumber evidence="1">2.7.7.27</ecNumber>
    </recommendedName>
    <alternativeName>
        <fullName evidence="1">ADP-glucose pyrophosphorylase</fullName>
        <shortName evidence="1">ADPGlc PPase</shortName>
    </alternativeName>
    <alternativeName>
        <fullName evidence="1">ADP-glucose synthase</fullName>
    </alternativeName>
</protein>
<comment type="function">
    <text evidence="1">Involved in the biosynthesis of ADP-glucose, a building block required for the elongation reactions to produce glycogen. Catalyzes the reaction between ATP and alpha-D-glucose 1-phosphate (G1P) to produce pyrophosphate and ADP-Glc.</text>
</comment>
<comment type="catalytic activity">
    <reaction evidence="1">
        <text>alpha-D-glucose 1-phosphate + ATP + H(+) = ADP-alpha-D-glucose + diphosphate</text>
        <dbReference type="Rhea" id="RHEA:12120"/>
        <dbReference type="ChEBI" id="CHEBI:15378"/>
        <dbReference type="ChEBI" id="CHEBI:30616"/>
        <dbReference type="ChEBI" id="CHEBI:33019"/>
        <dbReference type="ChEBI" id="CHEBI:57498"/>
        <dbReference type="ChEBI" id="CHEBI:58601"/>
        <dbReference type="EC" id="2.7.7.27"/>
    </reaction>
</comment>
<comment type="pathway">
    <text evidence="1">Glycan biosynthesis; glycogen biosynthesis.</text>
</comment>
<comment type="subunit">
    <text evidence="1">Homotetramer.</text>
</comment>
<comment type="similarity">
    <text evidence="1">Belongs to the bacterial/plant glucose-1-phosphate adenylyltransferase family.</text>
</comment>
<accession>C1AZL1</accession>
<dbReference type="EC" id="2.7.7.27" evidence="1"/>
<dbReference type="EMBL" id="AP011115">
    <property type="protein sequence ID" value="BAH54282.1"/>
    <property type="molecule type" value="Genomic_DNA"/>
</dbReference>
<dbReference type="RefSeq" id="WP_015889769.1">
    <property type="nucleotide sequence ID" value="NC_012522.1"/>
</dbReference>
<dbReference type="SMR" id="C1AZL1"/>
<dbReference type="STRING" id="632772.ROP_60350"/>
<dbReference type="KEGG" id="rop:ROP_60350"/>
<dbReference type="PATRIC" id="fig|632772.20.peg.6303"/>
<dbReference type="HOGENOM" id="CLU_029499_14_1_11"/>
<dbReference type="OrthoDB" id="9801810at2"/>
<dbReference type="UniPathway" id="UPA00164"/>
<dbReference type="Proteomes" id="UP000002212">
    <property type="component" value="Chromosome"/>
</dbReference>
<dbReference type="GO" id="GO:0005524">
    <property type="term" value="F:ATP binding"/>
    <property type="evidence" value="ECO:0007669"/>
    <property type="project" value="UniProtKB-KW"/>
</dbReference>
<dbReference type="GO" id="GO:0008878">
    <property type="term" value="F:glucose-1-phosphate adenylyltransferase activity"/>
    <property type="evidence" value="ECO:0007669"/>
    <property type="project" value="UniProtKB-UniRule"/>
</dbReference>
<dbReference type="GO" id="GO:0005978">
    <property type="term" value="P:glycogen biosynthetic process"/>
    <property type="evidence" value="ECO:0007669"/>
    <property type="project" value="UniProtKB-UniRule"/>
</dbReference>
<dbReference type="CDD" id="cd02508">
    <property type="entry name" value="ADP_Glucose_PP"/>
    <property type="match status" value="1"/>
</dbReference>
<dbReference type="CDD" id="cd04651">
    <property type="entry name" value="LbH_G1P_AT_C"/>
    <property type="match status" value="1"/>
</dbReference>
<dbReference type="FunFam" id="3.90.550.10:FF:000014">
    <property type="entry name" value="Glucose-1-phosphate adenylyltransferase"/>
    <property type="match status" value="1"/>
</dbReference>
<dbReference type="Gene3D" id="2.160.10.10">
    <property type="entry name" value="Hexapeptide repeat proteins"/>
    <property type="match status" value="1"/>
</dbReference>
<dbReference type="Gene3D" id="3.90.550.10">
    <property type="entry name" value="Spore Coat Polysaccharide Biosynthesis Protein SpsA, Chain A"/>
    <property type="match status" value="1"/>
</dbReference>
<dbReference type="HAMAP" id="MF_00624">
    <property type="entry name" value="GlgC"/>
    <property type="match status" value="1"/>
</dbReference>
<dbReference type="InterPro" id="IPR011831">
    <property type="entry name" value="ADP-Glc_PPase"/>
</dbReference>
<dbReference type="InterPro" id="IPR005836">
    <property type="entry name" value="ADP_Glu_pyroP_CS"/>
</dbReference>
<dbReference type="InterPro" id="IPR023049">
    <property type="entry name" value="GlgC_bac"/>
</dbReference>
<dbReference type="InterPro" id="IPR056818">
    <property type="entry name" value="GlmU/GlgC-like_hexapep"/>
</dbReference>
<dbReference type="InterPro" id="IPR005835">
    <property type="entry name" value="NTP_transferase_dom"/>
</dbReference>
<dbReference type="InterPro" id="IPR029044">
    <property type="entry name" value="Nucleotide-diphossugar_trans"/>
</dbReference>
<dbReference type="InterPro" id="IPR011004">
    <property type="entry name" value="Trimer_LpxA-like_sf"/>
</dbReference>
<dbReference type="NCBIfam" id="TIGR02091">
    <property type="entry name" value="glgC"/>
    <property type="match status" value="1"/>
</dbReference>
<dbReference type="NCBIfam" id="NF001947">
    <property type="entry name" value="PRK00725.1"/>
    <property type="match status" value="1"/>
</dbReference>
<dbReference type="NCBIfam" id="NF002023">
    <property type="entry name" value="PRK00844.1"/>
    <property type="match status" value="1"/>
</dbReference>
<dbReference type="PANTHER" id="PTHR43523:SF2">
    <property type="entry name" value="GLUCOSE-1-PHOSPHATE ADENYLYLTRANSFERASE"/>
    <property type="match status" value="1"/>
</dbReference>
<dbReference type="PANTHER" id="PTHR43523">
    <property type="entry name" value="GLUCOSE-1-PHOSPHATE ADENYLYLTRANSFERASE-RELATED"/>
    <property type="match status" value="1"/>
</dbReference>
<dbReference type="Pfam" id="PF24894">
    <property type="entry name" value="Hexapep_GlmU"/>
    <property type="match status" value="1"/>
</dbReference>
<dbReference type="Pfam" id="PF00483">
    <property type="entry name" value="NTP_transferase"/>
    <property type="match status" value="1"/>
</dbReference>
<dbReference type="SUPFAM" id="SSF53448">
    <property type="entry name" value="Nucleotide-diphospho-sugar transferases"/>
    <property type="match status" value="1"/>
</dbReference>
<dbReference type="SUPFAM" id="SSF51161">
    <property type="entry name" value="Trimeric LpxA-like enzymes"/>
    <property type="match status" value="1"/>
</dbReference>
<dbReference type="PROSITE" id="PS00808">
    <property type="entry name" value="ADP_GLC_PYROPHOSPH_1"/>
    <property type="match status" value="1"/>
</dbReference>
<dbReference type="PROSITE" id="PS00809">
    <property type="entry name" value="ADP_GLC_PYROPHOSPH_2"/>
    <property type="match status" value="1"/>
</dbReference>
<dbReference type="PROSITE" id="PS00810">
    <property type="entry name" value="ADP_GLC_PYROPHOSPH_3"/>
    <property type="match status" value="1"/>
</dbReference>
<name>GLGC_RHOOB</name>
<evidence type="ECO:0000255" key="1">
    <source>
        <dbReference type="HAMAP-Rule" id="MF_00624"/>
    </source>
</evidence>
<reference key="1">
    <citation type="submission" date="2009-03" db="EMBL/GenBank/DDBJ databases">
        <title>Comparison of the complete genome sequences of Rhodococcus erythropolis PR4 and Rhodococcus opacus B4.</title>
        <authorList>
            <person name="Takarada H."/>
            <person name="Sekine M."/>
            <person name="Hosoyama A."/>
            <person name="Yamada R."/>
            <person name="Fujisawa T."/>
            <person name="Omata S."/>
            <person name="Shimizu A."/>
            <person name="Tsukatani N."/>
            <person name="Tanikawa S."/>
            <person name="Fujita N."/>
            <person name="Harayama S."/>
        </authorList>
    </citation>
    <scope>NUCLEOTIDE SEQUENCE [LARGE SCALE GENOMIC DNA]</scope>
    <source>
        <strain>B4</strain>
    </source>
</reference>
<organism>
    <name type="scientific">Rhodococcus opacus (strain B4)</name>
    <dbReference type="NCBI Taxonomy" id="632772"/>
    <lineage>
        <taxon>Bacteria</taxon>
        <taxon>Bacillati</taxon>
        <taxon>Actinomycetota</taxon>
        <taxon>Actinomycetes</taxon>
        <taxon>Mycobacteriales</taxon>
        <taxon>Nocardiaceae</taxon>
        <taxon>Rhodococcus</taxon>
    </lineage>
</organism>